<gene>
    <name evidence="2" type="primary">rpoZ</name>
    <name type="ordered locus">SVI_4077</name>
</gene>
<protein>
    <recommendedName>
        <fullName evidence="2">DNA-directed RNA polymerase subunit omega</fullName>
        <shortName evidence="2">RNAP omega subunit</shortName>
        <ecNumber evidence="2">2.7.7.6</ecNumber>
    </recommendedName>
    <alternativeName>
        <fullName evidence="2">RNA polymerase omega subunit</fullName>
    </alternativeName>
    <alternativeName>
        <fullName evidence="2">Transcriptase subunit omega</fullName>
    </alternativeName>
</protein>
<sequence length="94" mass="10328">MARVTVEDAVNQIGNRFDMILVAARRARQIAVQGKDPMVEEENDKPTVIALREIELGLVTADTLDADERQTVREREAAEIAAVAAIAEGRNDIL</sequence>
<reference key="1">
    <citation type="submission" date="2003-07" db="EMBL/GenBank/DDBJ databases">
        <title>Cloning and purification of the rpoZ gene encoding RNA polymerase omega subunit from deep-sea piezophilic bacterium, Shewanella violacea strain DSS12.</title>
        <authorList>
            <person name="Kawano H."/>
            <person name="Suzaki Y."/>
            <person name="Fukuchi J."/>
            <person name="Nakasone K."/>
            <person name="Abe F."/>
            <person name="Kato C."/>
            <person name="Yoshida Y."/>
            <person name="Usami R."/>
            <person name="Horikoshi K."/>
        </authorList>
    </citation>
    <scope>NUCLEOTIDE SEQUENCE [GENOMIC DNA]</scope>
</reference>
<reference key="2">
    <citation type="journal article" date="2010" name="Mol. Biosyst.">
        <title>Complete genome sequence and comparative analysis of Shewanella violacea, a psychrophilic and piezophilic bacterium from deep sea floor sediments.</title>
        <authorList>
            <person name="Aono E."/>
            <person name="Baba T."/>
            <person name="Ara T."/>
            <person name="Nishi T."/>
            <person name="Nakamichi T."/>
            <person name="Inamoto E."/>
            <person name="Toyonaga H."/>
            <person name="Hasegawa M."/>
            <person name="Takai Y."/>
            <person name="Okumura Y."/>
            <person name="Baba M."/>
            <person name="Tomita M."/>
            <person name="Kato C."/>
            <person name="Oshima T."/>
            <person name="Nakasone K."/>
            <person name="Mori H."/>
        </authorList>
    </citation>
    <scope>NUCLEOTIDE SEQUENCE [LARGE SCALE GENOMIC DNA]</scope>
    <source>
        <strain>JCM 10179 / CIP 106290 / LMG 19151 / DSS12</strain>
    </source>
</reference>
<organism>
    <name type="scientific">Shewanella violacea (strain JCM 10179 / CIP 106290 / LMG 19151 / DSS12)</name>
    <dbReference type="NCBI Taxonomy" id="637905"/>
    <lineage>
        <taxon>Bacteria</taxon>
        <taxon>Pseudomonadati</taxon>
        <taxon>Pseudomonadota</taxon>
        <taxon>Gammaproteobacteria</taxon>
        <taxon>Alteromonadales</taxon>
        <taxon>Shewanellaceae</taxon>
        <taxon>Shewanella</taxon>
    </lineage>
</organism>
<keyword id="KW-0240">DNA-directed RNA polymerase</keyword>
<keyword id="KW-0548">Nucleotidyltransferase</keyword>
<keyword id="KW-1185">Reference proteome</keyword>
<keyword id="KW-0804">Transcription</keyword>
<keyword id="KW-0808">Transferase</keyword>
<evidence type="ECO:0000250" key="1"/>
<evidence type="ECO:0000255" key="2">
    <source>
        <dbReference type="HAMAP-Rule" id="MF_00366"/>
    </source>
</evidence>
<dbReference type="EC" id="2.7.7.6" evidence="2"/>
<dbReference type="EMBL" id="AB114448">
    <property type="protein sequence ID" value="BAC79234.1"/>
    <property type="molecule type" value="Genomic_DNA"/>
</dbReference>
<dbReference type="EMBL" id="AP011177">
    <property type="protein sequence ID" value="BAJ04048.1"/>
    <property type="molecule type" value="Genomic_DNA"/>
</dbReference>
<dbReference type="RefSeq" id="WP_013053339.1">
    <property type="nucleotide sequence ID" value="NC_014012.1"/>
</dbReference>
<dbReference type="SMR" id="Q7WZE4"/>
<dbReference type="STRING" id="637905.SVI_4077"/>
<dbReference type="KEGG" id="svo:SVI_4077"/>
<dbReference type="eggNOG" id="COG1758">
    <property type="taxonomic scope" value="Bacteria"/>
</dbReference>
<dbReference type="HOGENOM" id="CLU_125406_5_3_6"/>
<dbReference type="OrthoDB" id="9796300at2"/>
<dbReference type="Proteomes" id="UP000002350">
    <property type="component" value="Chromosome"/>
</dbReference>
<dbReference type="GO" id="GO:0000428">
    <property type="term" value="C:DNA-directed RNA polymerase complex"/>
    <property type="evidence" value="ECO:0007669"/>
    <property type="project" value="UniProtKB-KW"/>
</dbReference>
<dbReference type="GO" id="GO:0003677">
    <property type="term" value="F:DNA binding"/>
    <property type="evidence" value="ECO:0007669"/>
    <property type="project" value="UniProtKB-UniRule"/>
</dbReference>
<dbReference type="GO" id="GO:0003899">
    <property type="term" value="F:DNA-directed RNA polymerase activity"/>
    <property type="evidence" value="ECO:0007669"/>
    <property type="project" value="UniProtKB-UniRule"/>
</dbReference>
<dbReference type="GO" id="GO:0006351">
    <property type="term" value="P:DNA-templated transcription"/>
    <property type="evidence" value="ECO:0007669"/>
    <property type="project" value="UniProtKB-UniRule"/>
</dbReference>
<dbReference type="Gene3D" id="3.90.940.10">
    <property type="match status" value="1"/>
</dbReference>
<dbReference type="HAMAP" id="MF_00366">
    <property type="entry name" value="RNApol_bact_RpoZ"/>
    <property type="match status" value="1"/>
</dbReference>
<dbReference type="InterPro" id="IPR003716">
    <property type="entry name" value="DNA-dir_RNA_pol_omega"/>
</dbReference>
<dbReference type="InterPro" id="IPR006110">
    <property type="entry name" value="Pol_omega/Rpo6/RPB6"/>
</dbReference>
<dbReference type="InterPro" id="IPR036161">
    <property type="entry name" value="RPB6/omega-like_sf"/>
</dbReference>
<dbReference type="NCBIfam" id="TIGR00690">
    <property type="entry name" value="rpoZ"/>
    <property type="match status" value="1"/>
</dbReference>
<dbReference type="PANTHER" id="PTHR34476">
    <property type="entry name" value="DNA-DIRECTED RNA POLYMERASE SUBUNIT OMEGA"/>
    <property type="match status" value="1"/>
</dbReference>
<dbReference type="PANTHER" id="PTHR34476:SF1">
    <property type="entry name" value="DNA-DIRECTED RNA POLYMERASE SUBUNIT OMEGA"/>
    <property type="match status" value="1"/>
</dbReference>
<dbReference type="Pfam" id="PF01192">
    <property type="entry name" value="RNA_pol_Rpb6"/>
    <property type="match status" value="1"/>
</dbReference>
<dbReference type="SMART" id="SM01409">
    <property type="entry name" value="RNA_pol_Rpb6"/>
    <property type="match status" value="1"/>
</dbReference>
<dbReference type="SUPFAM" id="SSF63562">
    <property type="entry name" value="RPB6/omega subunit-like"/>
    <property type="match status" value="1"/>
</dbReference>
<name>RPOZ_SHEVD</name>
<proteinExistence type="inferred from homology"/>
<feature type="chain" id="PRO_0000128975" description="DNA-directed RNA polymerase subunit omega">
    <location>
        <begin position="1"/>
        <end position="94"/>
    </location>
</feature>
<accession>Q7WZE4</accession>
<accession>D4ZDY7</accession>
<comment type="function">
    <text evidence="2">Promotes RNA polymerase assembly. Latches the N- and C-terminal regions of the beta' subunit thereby facilitating its interaction with the beta and alpha subunits.</text>
</comment>
<comment type="catalytic activity">
    <reaction evidence="2">
        <text>RNA(n) + a ribonucleoside 5'-triphosphate = RNA(n+1) + diphosphate</text>
        <dbReference type="Rhea" id="RHEA:21248"/>
        <dbReference type="Rhea" id="RHEA-COMP:14527"/>
        <dbReference type="Rhea" id="RHEA-COMP:17342"/>
        <dbReference type="ChEBI" id="CHEBI:33019"/>
        <dbReference type="ChEBI" id="CHEBI:61557"/>
        <dbReference type="ChEBI" id="CHEBI:140395"/>
        <dbReference type="EC" id="2.7.7.6"/>
    </reaction>
</comment>
<comment type="subunit">
    <text evidence="1">Consists of a sigma factor and the RNAP core enzyme which is composed of 2 alpha chains, 1 beta chain, 1 beta' chain and 1 subunit omega.</text>
</comment>
<comment type="similarity">
    <text evidence="2">Belongs to the RNA polymerase subunit omega family.</text>
</comment>